<feature type="chain" id="PRO_0000253223" description="Uncharacterized protein L108">
    <location>
        <begin position="1"/>
        <end position="273"/>
    </location>
</feature>
<dbReference type="EMBL" id="AY653733">
    <property type="protein sequence ID" value="AAV50383.1"/>
    <property type="molecule type" value="Genomic_DNA"/>
</dbReference>
<dbReference type="SMR" id="Q5UPJ0"/>
<dbReference type="KEGG" id="vg:9924706"/>
<dbReference type="Proteomes" id="UP000001134">
    <property type="component" value="Genome"/>
</dbReference>
<dbReference type="Gene3D" id="3.70.10.10">
    <property type="match status" value="1"/>
</dbReference>
<keyword id="KW-1185">Reference proteome</keyword>
<organism>
    <name type="scientific">Acanthamoeba polyphaga mimivirus</name>
    <name type="common">APMV</name>
    <dbReference type="NCBI Taxonomy" id="212035"/>
    <lineage>
        <taxon>Viruses</taxon>
        <taxon>Varidnaviria</taxon>
        <taxon>Bamfordvirae</taxon>
        <taxon>Nucleocytoviricota</taxon>
        <taxon>Megaviricetes</taxon>
        <taxon>Imitervirales</taxon>
        <taxon>Mimiviridae</taxon>
        <taxon>Megamimivirinae</taxon>
        <taxon>Mimivirus</taxon>
        <taxon>Mimivirus bradfordmassiliense</taxon>
    </lineage>
</organism>
<name>YL108_MIMIV</name>
<sequence>MTSCADNIHDIICNDPNNIVVASMTCDDYFKKIITVIKKIHNRCYMKFINSQTKNGENTCKFIVTGDNSDNTMNCTRIVMKKKHFKYLRCDEKELFIKINVNDFCKKLDMINSYSEIIFYIKKDNINHLFINIITDKNSNNATRIPLIELNYNNISPLKIVFNDKLSVRSWYFFSIFKQIACSSKTIDIITDKKTILFVYTHGNKIKNIDNNINVNTDITTTNLGTYDLTTLSLISDFYEVYSEINMYFKENGLAFVIPIGFGKIYFLIESKK</sequence>
<accession>Q5UPJ0</accession>
<gene>
    <name type="ordered locus">MIMI_L108</name>
</gene>
<protein>
    <recommendedName>
        <fullName>Uncharacterized protein L108</fullName>
    </recommendedName>
</protein>
<organismHost>
    <name type="scientific">Acanthamoeba polyphaga</name>
    <name type="common">Amoeba</name>
    <dbReference type="NCBI Taxonomy" id="5757"/>
</organismHost>
<proteinExistence type="predicted"/>
<reference key="1">
    <citation type="journal article" date="2004" name="Science">
        <title>The 1.2-megabase genome sequence of Mimivirus.</title>
        <authorList>
            <person name="Raoult D."/>
            <person name="Audic S."/>
            <person name="Robert C."/>
            <person name="Abergel C."/>
            <person name="Renesto P."/>
            <person name="Ogata H."/>
            <person name="La Scola B."/>
            <person name="Susan M."/>
            <person name="Claverie J.-M."/>
        </authorList>
    </citation>
    <scope>NUCLEOTIDE SEQUENCE [LARGE SCALE GENOMIC DNA]</scope>
    <source>
        <strain>Rowbotham-Bradford</strain>
    </source>
</reference>